<name>TVA2_MOUSE</name>
<dbReference type="PIR" id="A02015">
    <property type="entry name" value="RWMSAV"/>
</dbReference>
<dbReference type="PDB" id="1D9K">
    <property type="method" value="X-ray"/>
    <property type="resolution" value="3.20 A"/>
    <property type="chains" value="A/E=76-132"/>
</dbReference>
<dbReference type="PDBsum" id="1D9K"/>
<dbReference type="SMR" id="P01739"/>
<dbReference type="FunCoup" id="P01739">
    <property type="interactions" value="516"/>
</dbReference>
<dbReference type="GlyGen" id="P01739">
    <property type="glycosylation" value="1 site"/>
</dbReference>
<dbReference type="InParanoid" id="P01739"/>
<dbReference type="EvolutionaryTrace" id="P01739"/>
<dbReference type="Proteomes" id="UP000000589">
    <property type="component" value="Unplaced"/>
</dbReference>
<dbReference type="RNAct" id="P01739">
    <property type="molecule type" value="protein"/>
</dbReference>
<dbReference type="GO" id="GO:0042101">
    <property type="term" value="C:T cell receptor complex"/>
    <property type="evidence" value="ECO:0007669"/>
    <property type="project" value="UniProtKB-KW"/>
</dbReference>
<dbReference type="GO" id="GO:0042605">
    <property type="term" value="F:peptide antigen binding"/>
    <property type="evidence" value="ECO:0000318"/>
    <property type="project" value="GO_Central"/>
</dbReference>
<dbReference type="GO" id="GO:0002250">
    <property type="term" value="P:adaptive immune response"/>
    <property type="evidence" value="ECO:0007669"/>
    <property type="project" value="UniProtKB-KW"/>
</dbReference>
<dbReference type="CDD" id="cd04983">
    <property type="entry name" value="IgV_TCR_alpha"/>
    <property type="match status" value="1"/>
</dbReference>
<dbReference type="Gene3D" id="2.60.40.10">
    <property type="entry name" value="Immunoglobulins"/>
    <property type="match status" value="1"/>
</dbReference>
<dbReference type="InterPro" id="IPR007110">
    <property type="entry name" value="Ig-like_dom"/>
</dbReference>
<dbReference type="InterPro" id="IPR036179">
    <property type="entry name" value="Ig-like_dom_sf"/>
</dbReference>
<dbReference type="InterPro" id="IPR013783">
    <property type="entry name" value="Ig-like_fold"/>
</dbReference>
<dbReference type="InterPro" id="IPR003599">
    <property type="entry name" value="Ig_sub"/>
</dbReference>
<dbReference type="InterPro" id="IPR013106">
    <property type="entry name" value="Ig_V-set"/>
</dbReference>
<dbReference type="InterPro" id="IPR051006">
    <property type="entry name" value="TCR_variable_domain"/>
</dbReference>
<dbReference type="PANTHER" id="PTHR19343">
    <property type="entry name" value="T CELL RECEPTOR ALPHA VARIABLE 1-2"/>
    <property type="match status" value="1"/>
</dbReference>
<dbReference type="PANTHER" id="PTHR19343:SF3">
    <property type="entry name" value="T CELL RECEPTOR ALPHA VARIABLE 12-2"/>
    <property type="match status" value="1"/>
</dbReference>
<dbReference type="Pfam" id="PF07686">
    <property type="entry name" value="V-set"/>
    <property type="match status" value="1"/>
</dbReference>
<dbReference type="SMART" id="SM00409">
    <property type="entry name" value="IG"/>
    <property type="match status" value="1"/>
</dbReference>
<dbReference type="SMART" id="SM00406">
    <property type="entry name" value="IGv"/>
    <property type="match status" value="1"/>
</dbReference>
<dbReference type="SUPFAM" id="SSF48726">
    <property type="entry name" value="Immunoglobulin"/>
    <property type="match status" value="1"/>
</dbReference>
<dbReference type="PROSITE" id="PS50835">
    <property type="entry name" value="IG_LIKE"/>
    <property type="match status" value="1"/>
</dbReference>
<organism>
    <name type="scientific">Mus musculus</name>
    <name type="common">Mouse</name>
    <dbReference type="NCBI Taxonomy" id="10090"/>
    <lineage>
        <taxon>Eukaryota</taxon>
        <taxon>Metazoa</taxon>
        <taxon>Chordata</taxon>
        <taxon>Craniata</taxon>
        <taxon>Vertebrata</taxon>
        <taxon>Euteleostomi</taxon>
        <taxon>Mammalia</taxon>
        <taxon>Eutheria</taxon>
        <taxon>Euarchontoglires</taxon>
        <taxon>Glires</taxon>
        <taxon>Rodentia</taxon>
        <taxon>Myomorpha</taxon>
        <taxon>Muroidea</taxon>
        <taxon>Muridae</taxon>
        <taxon>Murinae</taxon>
        <taxon>Mus</taxon>
        <taxon>Mus</taxon>
    </lineage>
</organism>
<sequence>MKSLSVSLVVLWLLLNWVNSQQNVQQSPESLIVPEGARTSLNCTFSDSASQYFWWYRQHSGKAPKALMSIFSNGEKEEGRFTIHLNKASLHFSLHIRDSQPSDSALYLCAVTLYGGSGNKLIFGTGTLLSVK</sequence>
<reference key="1">
    <citation type="journal article" date="1984" name="Nature">
        <title>A third type of murine T-cell receptor gene.</title>
        <authorList>
            <person name="Chien Y."/>
            <person name="Becker D.M."/>
            <person name="Lindsten T."/>
            <person name="Okamura M."/>
            <person name="Cohen D.I."/>
            <person name="Davis M.M."/>
        </authorList>
    </citation>
    <scope>NUCLEOTIDE SEQUENCE (CLONE TT11)</scope>
</reference>
<keyword id="KW-0002">3D-structure</keyword>
<keyword id="KW-1064">Adaptive immunity</keyword>
<keyword id="KW-0325">Glycoprotein</keyword>
<keyword id="KW-0391">Immunity</keyword>
<keyword id="KW-0393">Immunoglobulin domain</keyword>
<keyword id="KW-0675">Receptor</keyword>
<keyword id="KW-1185">Reference proteome</keyword>
<keyword id="KW-0732">Signal</keyword>
<keyword id="KW-1279">T cell receptor</keyword>
<proteinExistence type="evidence at protein level"/>
<evidence type="ECO:0007829" key="1">
    <source>
        <dbReference type="PDB" id="1D9K"/>
    </source>
</evidence>
<protein>
    <recommendedName>
        <fullName>T-cell receptor alpha chain V region 2B4</fullName>
    </recommendedName>
</protein>
<feature type="signal peptide">
    <location>
        <begin position="1"/>
        <end position="20"/>
    </location>
</feature>
<feature type="chain" id="PRO_0000033594" description="T-cell receptor alpha chain V region 2B4">
    <location>
        <begin position="21"/>
        <end position="132"/>
    </location>
</feature>
<feature type="region of interest" description="V segment">
    <location>
        <begin position="21"/>
        <end position="113"/>
    </location>
</feature>
<feature type="region of interest" description="D segment">
    <location>
        <begin position="114"/>
        <end position="117"/>
    </location>
</feature>
<feature type="region of interest" description="J segment">
    <location>
        <begin position="118"/>
        <end position="132"/>
    </location>
</feature>
<feature type="glycosylation site" description="N-linked (GlcNAc...) asparagine">
    <location>
        <position position="42"/>
    </location>
</feature>
<feature type="non-terminal residue">
    <location>
        <position position="132"/>
    </location>
</feature>
<feature type="strand" evidence="1">
    <location>
        <begin position="30"/>
        <end position="34"/>
    </location>
</feature>
<feature type="strand" evidence="1">
    <location>
        <begin position="39"/>
        <end position="45"/>
    </location>
</feature>
<feature type="strand" evidence="1">
    <location>
        <begin position="55"/>
        <end position="57"/>
    </location>
</feature>
<feature type="strand" evidence="1">
    <location>
        <begin position="73"/>
        <end position="78"/>
    </location>
</feature>
<feature type="strand" evidence="1">
    <location>
        <begin position="81"/>
        <end position="86"/>
    </location>
</feature>
<feature type="turn" evidence="1">
    <location>
        <begin position="87"/>
        <end position="90"/>
    </location>
</feature>
<feature type="strand" evidence="1">
    <location>
        <begin position="91"/>
        <end position="96"/>
    </location>
</feature>
<feature type="strand" evidence="1">
    <location>
        <begin position="108"/>
        <end position="111"/>
    </location>
</feature>
<feature type="strand" evidence="1">
    <location>
        <begin position="117"/>
        <end position="119"/>
    </location>
</feature>
<feature type="strand" evidence="1">
    <location>
        <begin position="129"/>
        <end position="131"/>
    </location>
</feature>
<accession>P01739</accession>